<organism>
    <name type="scientific">Schizosaccharomyces pombe (strain 972 / ATCC 24843)</name>
    <name type="common">Fission yeast</name>
    <dbReference type="NCBI Taxonomy" id="284812"/>
    <lineage>
        <taxon>Eukaryota</taxon>
        <taxon>Fungi</taxon>
        <taxon>Dikarya</taxon>
        <taxon>Ascomycota</taxon>
        <taxon>Taphrinomycotina</taxon>
        <taxon>Schizosaccharomycetes</taxon>
        <taxon>Schizosaccharomycetales</taxon>
        <taxon>Schizosaccharomycetaceae</taxon>
        <taxon>Schizosaccharomyces</taxon>
    </lineage>
</organism>
<feature type="chain" id="PRO_0000389115" description="Extender of the chronological lifespan protein 2">
    <location>
        <begin position="1"/>
        <end position="84"/>
    </location>
</feature>
<reference key="1">
    <citation type="journal article" date="2002" name="Nature">
        <title>The genome sequence of Schizosaccharomyces pombe.</title>
        <authorList>
            <person name="Wood V."/>
            <person name="Gwilliam R."/>
            <person name="Rajandream M.A."/>
            <person name="Lyne M.H."/>
            <person name="Lyne R."/>
            <person name="Stewart A."/>
            <person name="Sgouros J.G."/>
            <person name="Peat N."/>
            <person name="Hayles J."/>
            <person name="Baker S.G."/>
            <person name="Basham D."/>
            <person name="Bowman S."/>
            <person name="Brooks K."/>
            <person name="Brown D."/>
            <person name="Brown S."/>
            <person name="Chillingworth T."/>
            <person name="Churcher C.M."/>
            <person name="Collins M."/>
            <person name="Connor R."/>
            <person name="Cronin A."/>
            <person name="Davis P."/>
            <person name="Feltwell T."/>
            <person name="Fraser A."/>
            <person name="Gentles S."/>
            <person name="Goble A."/>
            <person name="Hamlin N."/>
            <person name="Harris D.E."/>
            <person name="Hidalgo J."/>
            <person name="Hodgson G."/>
            <person name="Holroyd S."/>
            <person name="Hornsby T."/>
            <person name="Howarth S."/>
            <person name="Huckle E.J."/>
            <person name="Hunt S."/>
            <person name="Jagels K."/>
            <person name="James K.D."/>
            <person name="Jones L."/>
            <person name="Jones M."/>
            <person name="Leather S."/>
            <person name="McDonald S."/>
            <person name="McLean J."/>
            <person name="Mooney P."/>
            <person name="Moule S."/>
            <person name="Mungall K.L."/>
            <person name="Murphy L.D."/>
            <person name="Niblett D."/>
            <person name="Odell C."/>
            <person name="Oliver K."/>
            <person name="O'Neil S."/>
            <person name="Pearson D."/>
            <person name="Quail M.A."/>
            <person name="Rabbinowitsch E."/>
            <person name="Rutherford K.M."/>
            <person name="Rutter S."/>
            <person name="Saunders D."/>
            <person name="Seeger K."/>
            <person name="Sharp S."/>
            <person name="Skelton J."/>
            <person name="Simmonds M.N."/>
            <person name="Squares R."/>
            <person name="Squares S."/>
            <person name="Stevens K."/>
            <person name="Taylor K."/>
            <person name="Taylor R.G."/>
            <person name="Tivey A."/>
            <person name="Walsh S.V."/>
            <person name="Warren T."/>
            <person name="Whitehead S."/>
            <person name="Woodward J.R."/>
            <person name="Volckaert G."/>
            <person name="Aert R."/>
            <person name="Robben J."/>
            <person name="Grymonprez B."/>
            <person name="Weltjens I."/>
            <person name="Vanstreels E."/>
            <person name="Rieger M."/>
            <person name="Schaefer M."/>
            <person name="Mueller-Auer S."/>
            <person name="Gabel C."/>
            <person name="Fuchs M."/>
            <person name="Duesterhoeft A."/>
            <person name="Fritzc C."/>
            <person name="Holzer E."/>
            <person name="Moestl D."/>
            <person name="Hilbert H."/>
            <person name="Borzym K."/>
            <person name="Langer I."/>
            <person name="Beck A."/>
            <person name="Lehrach H."/>
            <person name="Reinhardt R."/>
            <person name="Pohl T.M."/>
            <person name="Eger P."/>
            <person name="Zimmermann W."/>
            <person name="Wedler H."/>
            <person name="Wambutt R."/>
            <person name="Purnelle B."/>
            <person name="Goffeau A."/>
            <person name="Cadieu E."/>
            <person name="Dreano S."/>
            <person name="Gloux S."/>
            <person name="Lelaure V."/>
            <person name="Mottier S."/>
            <person name="Galibert F."/>
            <person name="Aves S.J."/>
            <person name="Xiang Z."/>
            <person name="Hunt C."/>
            <person name="Moore K."/>
            <person name="Hurst S.M."/>
            <person name="Lucas M."/>
            <person name="Rochet M."/>
            <person name="Gaillardin C."/>
            <person name="Tallada V.A."/>
            <person name="Garzon A."/>
            <person name="Thode G."/>
            <person name="Daga R.R."/>
            <person name="Cruzado L."/>
            <person name="Jimenez J."/>
            <person name="Sanchez M."/>
            <person name="del Rey F."/>
            <person name="Benito J."/>
            <person name="Dominguez A."/>
            <person name="Revuelta J.L."/>
            <person name="Moreno S."/>
            <person name="Armstrong J."/>
            <person name="Forsburg S.L."/>
            <person name="Cerutti L."/>
            <person name="Lowe T."/>
            <person name="McCombie W.R."/>
            <person name="Paulsen I."/>
            <person name="Potashkin J."/>
            <person name="Shpakovski G.V."/>
            <person name="Ussery D."/>
            <person name="Barrell B.G."/>
            <person name="Nurse P."/>
        </authorList>
    </citation>
    <scope>NUCLEOTIDE SEQUENCE [LARGE SCALE GENOMIC DNA]</scope>
    <source>
        <strain>972 / ATCC 24843</strain>
    </source>
</reference>
<reference key="2">
    <citation type="journal article" date="2009" name="Biosci. Biotechnol. Biochem.">
        <title>Identification of Ecl family genes that extend chronological lifespan in fission yeast.</title>
        <authorList>
            <person name="Ohtsuka H."/>
            <person name="Ogawa Y."/>
            <person name="Mizuno H."/>
            <person name="Mita S."/>
            <person name="Aiba H."/>
        </authorList>
    </citation>
    <scope>FUNCTION</scope>
    <scope>SUBCELLULAR LOCATION</scope>
    <scope>INDUCTION</scope>
</reference>
<accession>C6Y4C5</accession>
<evidence type="ECO:0000269" key="1">
    <source>
    </source>
</evidence>
<evidence type="ECO:0000305" key="2"/>
<name>ECL2_SCHPO</name>
<gene>
    <name type="primary">ecl2</name>
    <name type="ORF">SPBP35G2.16c</name>
</gene>
<proteinExistence type="evidence at transcript level"/>
<sequence>MDLDYCIICGKPTTGNLYCSRECHLQDCPGCGSTSEQCSYSKSADLHMLSSQYLDHFRRRSSMPSPSTSSSLLNGFVASRLAVL</sequence>
<keyword id="KW-0539">Nucleus</keyword>
<keyword id="KW-1185">Reference proteome</keyword>
<dbReference type="EMBL" id="CU329671">
    <property type="protein sequence ID" value="CBA11508.1"/>
    <property type="molecule type" value="Genomic_DNA"/>
</dbReference>
<dbReference type="RefSeq" id="XP_002788940.1">
    <property type="nucleotide sequence ID" value="XM_002788894.2"/>
</dbReference>
<dbReference type="SMR" id="C6Y4C5"/>
<dbReference type="BioGRID" id="1028491">
    <property type="interactions" value="6"/>
</dbReference>
<dbReference type="STRING" id="284812.C6Y4C5"/>
<dbReference type="iPTMnet" id="C6Y4C5"/>
<dbReference type="PaxDb" id="4896-SPBP35G2.16c.1"/>
<dbReference type="EnsemblFungi" id="SPBP35G2.16c.1">
    <property type="protein sequence ID" value="SPBP35G2.16c.1:pep"/>
    <property type="gene ID" value="SPBP35G2.16c"/>
</dbReference>
<dbReference type="PomBase" id="SPBP35G2.16c">
    <property type="gene designation" value="ecl2"/>
</dbReference>
<dbReference type="VEuPathDB" id="FungiDB:SPBP35G2.16c"/>
<dbReference type="HOGENOM" id="CLU_2528757_0_0_1"/>
<dbReference type="InParanoid" id="C6Y4C5"/>
<dbReference type="OMA" id="YCSRECH"/>
<dbReference type="PRO" id="PR:C6Y4C5"/>
<dbReference type="Proteomes" id="UP000002485">
    <property type="component" value="Chromosome II"/>
</dbReference>
<dbReference type="GO" id="GO:0005634">
    <property type="term" value="C:nucleus"/>
    <property type="evidence" value="ECO:0000314"/>
    <property type="project" value="PomBase"/>
</dbReference>
<dbReference type="InterPro" id="IPR024368">
    <property type="entry name" value="Ecl1/2/3"/>
</dbReference>
<dbReference type="Pfam" id="PF12855">
    <property type="entry name" value="Ecl1"/>
    <property type="match status" value="1"/>
</dbReference>
<comment type="function">
    <text evidence="1">Involved in chronological cell aging.</text>
</comment>
<comment type="subcellular location">
    <subcellularLocation>
        <location evidence="1">Nucleus</location>
    </subcellularLocation>
</comment>
<comment type="induction">
    <text evidence="1">Up-regulated transiently when the growth phase was changed from the log phase to the stationary phase.</text>
</comment>
<comment type="similarity">
    <text evidence="2">Belongs to the ecl1 family.</text>
</comment>
<protein>
    <recommendedName>
        <fullName>Extender of the chronological lifespan protein 2</fullName>
    </recommendedName>
</protein>